<reference key="1">
    <citation type="journal article" date="2002" name="J. Bacteriol.">
        <title>Whole-genome comparison of Mycobacterium tuberculosis clinical and laboratory strains.</title>
        <authorList>
            <person name="Fleischmann R.D."/>
            <person name="Alland D."/>
            <person name="Eisen J.A."/>
            <person name="Carpenter L."/>
            <person name="White O."/>
            <person name="Peterson J.D."/>
            <person name="DeBoy R.T."/>
            <person name="Dodson R.J."/>
            <person name="Gwinn M.L."/>
            <person name="Haft D.H."/>
            <person name="Hickey E.K."/>
            <person name="Kolonay J.F."/>
            <person name="Nelson W.C."/>
            <person name="Umayam L.A."/>
            <person name="Ermolaeva M.D."/>
            <person name="Salzberg S.L."/>
            <person name="Delcher A."/>
            <person name="Utterback T.R."/>
            <person name="Weidman J.F."/>
            <person name="Khouri H.M."/>
            <person name="Gill J."/>
            <person name="Mikula A."/>
            <person name="Bishai W."/>
            <person name="Jacobs W.R. Jr."/>
            <person name="Venter J.C."/>
            <person name="Fraser C.M."/>
        </authorList>
    </citation>
    <scope>NUCLEOTIDE SEQUENCE [LARGE SCALE GENOMIC DNA]</scope>
    <source>
        <strain>CDC 1551 / Oshkosh</strain>
    </source>
</reference>
<feature type="chain" id="PRO_0000428041" description="Putative phosphate permease MT2339">
    <location>
        <begin position="1"/>
        <end position="552"/>
    </location>
</feature>
<feature type="transmembrane region" description="Helical" evidence="2">
    <location>
        <begin position="38"/>
        <end position="58"/>
    </location>
</feature>
<feature type="transmembrane region" description="Helical" evidence="2">
    <location>
        <begin position="69"/>
        <end position="89"/>
    </location>
</feature>
<feature type="transmembrane region" description="Helical" evidence="2">
    <location>
        <begin position="107"/>
        <end position="127"/>
    </location>
</feature>
<feature type="transmembrane region" description="Helical" evidence="2">
    <location>
        <begin position="146"/>
        <end position="166"/>
    </location>
</feature>
<feature type="transmembrane region" description="Helical" evidence="2">
    <location>
        <begin position="178"/>
        <end position="198"/>
    </location>
</feature>
<feature type="transmembrane region" description="Helical" evidence="2">
    <location>
        <begin position="213"/>
        <end position="233"/>
    </location>
</feature>
<feature type="transmembrane region" description="Helical" evidence="2">
    <location>
        <begin position="326"/>
        <end position="346"/>
    </location>
</feature>
<feature type="transmembrane region" description="Helical" evidence="2">
    <location>
        <begin position="360"/>
        <end position="380"/>
    </location>
</feature>
<feature type="transmembrane region" description="Helical" evidence="2">
    <location>
        <begin position="389"/>
        <end position="409"/>
    </location>
</feature>
<feature type="transmembrane region" description="Helical" evidence="2">
    <location>
        <begin position="437"/>
        <end position="457"/>
    </location>
</feature>
<feature type="transmembrane region" description="Helical" evidence="2">
    <location>
        <begin position="472"/>
        <end position="492"/>
    </location>
</feature>
<feature type="transmembrane region" description="Helical" evidence="2">
    <location>
        <begin position="493"/>
        <end position="513"/>
    </location>
</feature>
<feature type="transmembrane region" description="Helical" evidence="2">
    <location>
        <begin position="526"/>
        <end position="546"/>
    </location>
</feature>
<accession>P9WIA4</accession>
<accession>L0TAQ9</accession>
<accession>P65712</accession>
<accession>Q50684</accession>
<organism>
    <name type="scientific">Mycobacterium tuberculosis (strain CDC 1551 / Oshkosh)</name>
    <dbReference type="NCBI Taxonomy" id="83331"/>
    <lineage>
        <taxon>Bacteria</taxon>
        <taxon>Bacillati</taxon>
        <taxon>Actinomycetota</taxon>
        <taxon>Actinomycetes</taxon>
        <taxon>Mycobacteriales</taxon>
        <taxon>Mycobacteriaceae</taxon>
        <taxon>Mycobacterium</taxon>
        <taxon>Mycobacterium tuberculosis complex</taxon>
    </lineage>
</organism>
<gene>
    <name type="ordered locus">MT2339</name>
</gene>
<comment type="function">
    <text evidence="1">Potential transporter for phosphate.</text>
</comment>
<comment type="subcellular location">
    <subcellularLocation>
        <location evidence="3">Cell membrane</location>
        <topology evidence="3">Multi-pass membrane protein</topology>
    </subcellularLocation>
</comment>
<comment type="similarity">
    <text evidence="3">Belongs to the inorganic phosphate transporter (PiT) (TC 2.A.20) family.</text>
</comment>
<keyword id="KW-1003">Cell membrane</keyword>
<keyword id="KW-0472">Membrane</keyword>
<keyword id="KW-0592">Phosphate transport</keyword>
<keyword id="KW-1185">Reference proteome</keyword>
<keyword id="KW-0812">Transmembrane</keyword>
<keyword id="KW-1133">Transmembrane helix</keyword>
<keyword id="KW-0813">Transport</keyword>
<evidence type="ECO:0000250" key="1"/>
<evidence type="ECO:0000255" key="2"/>
<evidence type="ECO:0000305" key="3"/>
<sequence length="552" mass="58789">MSDNAKHHRDGHLVASGLQDRAARTPQHEGFLGPDRPWHLSFSLLLAGSFVLFSWWAFDYAGSGANKVILVLATVVGMFMAFNVGGNDVANSFGTSVGAGTLTMKQALLVAAIFEVSGAVIAGGDVTETIRSGIVDLSGVSVDPRDFMNIMLSALSAAALWLLFANRMGYPVSTTHSIIGGIVGAAIALGMVSGQGGAALRMVQWDQIGQIVVSWVLSPVLGGLVSYLLYGVIKRHILLYNEQAERRLTEIKKERIAHRERHKAAFDRLTEIQQIAYTGALARDAVAANRKDFDPDELESDYYRELHEIDAKTSSVDAFRALQNWVPLVAAAGSMIIVAMLLFKGFKHMHLGLTTMNNYFIIAMVGAAVWMATFIFAKTLRGESLSRSTFLMFSWMQVFTASGFAFSHGSNDIANAIGPFAAILDVLRTGAIEGNAAVPAAAMVTFGVALCAGLWFIGRRVIATVGHNLTTMHPASGFAAELSAAGVVMGATVLGLPVSSTHILIGAVLGVGIVNRSTNWGLMKPIVLAWVITLPSAAILASVGLVALRAIF</sequence>
<name>Y2281_MYCTO</name>
<dbReference type="EMBL" id="AE000516">
    <property type="protein sequence ID" value="AAK46623.1"/>
    <property type="molecule type" value="Genomic_DNA"/>
</dbReference>
<dbReference type="PIR" id="E70731">
    <property type="entry name" value="E70731"/>
</dbReference>
<dbReference type="RefSeq" id="WP_003411694.1">
    <property type="nucleotide sequence ID" value="NZ_KK341227.1"/>
</dbReference>
<dbReference type="SMR" id="P9WIA4"/>
<dbReference type="KEGG" id="mtc:MT2339"/>
<dbReference type="PATRIC" id="fig|83331.31.peg.2517"/>
<dbReference type="HOGENOM" id="CLU_015355_3_3_11"/>
<dbReference type="Proteomes" id="UP000001020">
    <property type="component" value="Chromosome"/>
</dbReference>
<dbReference type="GO" id="GO:0005886">
    <property type="term" value="C:plasma membrane"/>
    <property type="evidence" value="ECO:0007669"/>
    <property type="project" value="UniProtKB-SubCell"/>
</dbReference>
<dbReference type="GO" id="GO:0005315">
    <property type="term" value="F:phosphate transmembrane transporter activity"/>
    <property type="evidence" value="ECO:0007669"/>
    <property type="project" value="InterPro"/>
</dbReference>
<dbReference type="GO" id="GO:0035435">
    <property type="term" value="P:phosphate ion transmembrane transport"/>
    <property type="evidence" value="ECO:0007669"/>
    <property type="project" value="TreeGrafter"/>
</dbReference>
<dbReference type="InterPro" id="IPR001204">
    <property type="entry name" value="Phos_transporter"/>
</dbReference>
<dbReference type="PANTHER" id="PTHR11101">
    <property type="entry name" value="PHOSPHATE TRANSPORTER"/>
    <property type="match status" value="1"/>
</dbReference>
<dbReference type="PANTHER" id="PTHR11101:SF80">
    <property type="entry name" value="PHOSPHATE TRANSPORTER"/>
    <property type="match status" value="1"/>
</dbReference>
<dbReference type="Pfam" id="PF01384">
    <property type="entry name" value="PHO4"/>
    <property type="match status" value="1"/>
</dbReference>
<protein>
    <recommendedName>
        <fullName>Putative phosphate permease MT2339</fullName>
    </recommendedName>
</protein>
<proteinExistence type="inferred from homology"/>